<keyword id="KW-0186">Copper</keyword>
<keyword id="KW-0903">Direct protein sequencing</keyword>
<keyword id="KW-0439">Lignin degradation</keyword>
<keyword id="KW-0479">Metal-binding</keyword>
<keyword id="KW-0560">Oxidoreductase</keyword>
<keyword id="KW-0964">Secreted</keyword>
<evidence type="ECO:0000250" key="1">
    <source>
        <dbReference type="UniProtKB" id="P86351"/>
    </source>
</evidence>
<evidence type="ECO:0000250" key="2">
    <source>
        <dbReference type="UniProtKB" id="Q12718"/>
    </source>
</evidence>
<evidence type="ECO:0000269" key="3">
    <source>
    </source>
</evidence>
<evidence type="ECO:0000303" key="4">
    <source>
    </source>
</evidence>
<evidence type="ECO:0000305" key="5"/>
<comment type="function">
    <text evidence="1 3">Lignin degradation and detoxification of lignin-derived products (By similarity). Active against a variety of substrates including the benzenediols hydroquinone and catechol, the benzenetriol pyrogallol, the methoxy-substituted phenol 2-methylcatechol, the aromatic diamine N,N-dimethyl-1,4-phenylenediamine and the nonphenolic heterocyclic compound ABTS (PubMed:23093860). Shows highest degradative activity towards hydroquinone with lower activity against ABTS and N,N-dimethyl-1,4-phenylenediamine (PubMed:23093860). Activity towards pyrogallol, catechol and 2-methyl-catechol is considerably attenuated (PubMed:23093860). Shows no activity against tyrosine (PubMed:23093860).</text>
</comment>
<comment type="catalytic activity">
    <reaction evidence="3">
        <text>4 hydroquinone + O2 = 4 benzosemiquinone + 2 H2O</text>
        <dbReference type="Rhea" id="RHEA:11276"/>
        <dbReference type="ChEBI" id="CHEBI:15377"/>
        <dbReference type="ChEBI" id="CHEBI:15379"/>
        <dbReference type="ChEBI" id="CHEBI:17594"/>
        <dbReference type="ChEBI" id="CHEBI:17977"/>
        <dbReference type="EC" id="1.10.3.2"/>
    </reaction>
</comment>
<comment type="cofactor">
    <cofactor evidence="2">
        <name>Cu cation</name>
        <dbReference type="ChEBI" id="CHEBI:23378"/>
    </cofactor>
    <text evidence="2 3">Binds 4 Cu cations per monomer (By similarity). Copper is inhibitory at concentrations of 1.25-5.0 mM (PubMed:23093860).</text>
</comment>
<comment type="activity regulation">
    <text evidence="3">Activity is enhanced by Al(3+) at concentrations of 1.25-2.5 mM (PubMed:23093860). Activity is reduced in the presence of Cu(2+), Hg(2+), Pb(2+), Fe(3+) and EDTA at concentrations of 1.25-5.0 mM (PubMed:23093860). Activity is not significantly affected by the presence of cations such as K(+), Ca(2+), Mg(2+), Mn(2+) or Zn(2+) at concentrations of 1.25-5.0 mM (PubMed:23093860).</text>
</comment>
<comment type="biophysicochemical properties">
    <kinetics>
        <KM evidence="3">0.392 mM for hydroquinone</KM>
        <KM evidence="3">0.775 mM for ABTS</KM>
    </kinetics>
    <phDependence>
        <text evidence="3">Optimum pH is 5.2 with ABTS as substrate. Optimum pH is 6.8 with hydroquinone as substrate.</text>
    </phDependence>
    <temperatureDependence>
        <text evidence="3">Optimum temperature is 30 degrees Celsius. Activity declines sharply as the temperature is increased from 40 to 80 degrees Celsius and is abolished at 80 degrees Celsius.</text>
    </temperatureDependence>
</comment>
<comment type="subcellular location">
    <subcellularLocation>
        <location evidence="2">Secreted</location>
    </subcellularLocation>
</comment>
<comment type="miscellaneous">
    <text evidence="3">Displays antiproliferative activity against a number of human tumor cell lines and inhibitory activity against HIV-1 reverse transcriptase.</text>
</comment>
<comment type="similarity">
    <text evidence="5">Belongs to the multicopper oxidase family.</text>
</comment>
<protein>
    <recommendedName>
        <fullName evidence="4">Laccase</fullName>
        <ecNumber evidence="3">1.10.3.2</ecNumber>
    </recommendedName>
</protein>
<name>LAC_AGAPC</name>
<organism>
    <name type="scientific">Agaricus placomyces</name>
    <name type="common">Mushroom</name>
    <dbReference type="NCBI Taxonomy" id="182818"/>
    <lineage>
        <taxon>Eukaryota</taxon>
        <taxon>Fungi</taxon>
        <taxon>Dikarya</taxon>
        <taxon>Basidiomycota</taxon>
        <taxon>Agaricomycotina</taxon>
        <taxon>Agaricomycetes</taxon>
        <taxon>Agaricomycetidae</taxon>
        <taxon>Agaricales</taxon>
        <taxon>Agaricineae</taxon>
        <taxon>Agaricaceae</taxon>
        <taxon>Agaricus</taxon>
    </lineage>
</organism>
<feature type="chain" id="PRO_0000417451" description="Laccase">
    <location>
        <begin position="1"/>
        <end position="15" status="greater than"/>
    </location>
</feature>
<feature type="non-terminal residue" evidence="4">
    <location>
        <position position="15"/>
    </location>
</feature>
<reference evidence="5" key="1">
    <citation type="journal article" date="2012" name="J. Biomed. Biotechnol.">
        <title>A laccase with antiproliferative and HIV-I reverse transcriptase inhibitory activities from the mycorrhizal fungus Agaricus placomyces.</title>
        <authorList>
            <person name="Sun J."/>
            <person name="Chen Q.J."/>
            <person name="Cao Q.Q."/>
            <person name="Wu Y.Y."/>
            <person name="Xu L.J."/>
            <person name="Zhu M.J."/>
            <person name="Ng T.B."/>
            <person name="Wang H.X."/>
            <person name="Zhang G.Q."/>
        </authorList>
    </citation>
    <scope>PROTEIN SEQUENCE</scope>
    <scope>FUNCTION</scope>
    <scope>CATALYTIC ACTIVITY</scope>
    <scope>ACTIVITY REGULATION</scope>
    <scope>BIOPHYSICOCHEMICAL PROPERTIES</scope>
    <source>
        <tissue evidence="4">Fruiting body</tissue>
    </source>
</reference>
<dbReference type="EC" id="1.10.3.2" evidence="3"/>
<dbReference type="GO" id="GO:0005576">
    <property type="term" value="C:extracellular region"/>
    <property type="evidence" value="ECO:0007669"/>
    <property type="project" value="UniProtKB-SubCell"/>
</dbReference>
<dbReference type="GO" id="GO:0052716">
    <property type="term" value="F:hydroquinone:oxygen oxidoreductase activity"/>
    <property type="evidence" value="ECO:0007669"/>
    <property type="project" value="UniProtKB-EC"/>
</dbReference>
<dbReference type="GO" id="GO:0046872">
    <property type="term" value="F:metal ion binding"/>
    <property type="evidence" value="ECO:0007669"/>
    <property type="project" value="UniProtKB-KW"/>
</dbReference>
<dbReference type="GO" id="GO:0046274">
    <property type="term" value="P:lignin catabolic process"/>
    <property type="evidence" value="ECO:0007669"/>
    <property type="project" value="UniProtKB-KW"/>
</dbReference>
<accession>B3EWI3</accession>
<proteinExistence type="evidence at protein level"/>
<sequence>DVIGPQAQVTLANQD</sequence>